<organism>
    <name type="scientific">Bacillus anthracis (strain A0248)</name>
    <dbReference type="NCBI Taxonomy" id="592021"/>
    <lineage>
        <taxon>Bacteria</taxon>
        <taxon>Bacillati</taxon>
        <taxon>Bacillota</taxon>
        <taxon>Bacilli</taxon>
        <taxon>Bacillales</taxon>
        <taxon>Bacillaceae</taxon>
        <taxon>Bacillus</taxon>
        <taxon>Bacillus cereus group</taxon>
    </lineage>
</organism>
<reference key="1">
    <citation type="submission" date="2009-04" db="EMBL/GenBank/DDBJ databases">
        <title>Genome sequence of Bacillus anthracis A0248.</title>
        <authorList>
            <person name="Dodson R.J."/>
            <person name="Munk A.C."/>
            <person name="Bruce D."/>
            <person name="Detter C."/>
            <person name="Tapia R."/>
            <person name="Sutton G."/>
            <person name="Sims D."/>
            <person name="Brettin T."/>
        </authorList>
    </citation>
    <scope>NUCLEOTIDE SEQUENCE [LARGE SCALE GENOMIC DNA]</scope>
    <source>
        <strain>A0248</strain>
    </source>
</reference>
<accession>C3P501</accession>
<evidence type="ECO:0000255" key="1">
    <source>
        <dbReference type="HAMAP-Rule" id="MF_01018"/>
    </source>
</evidence>
<protein>
    <recommendedName>
        <fullName evidence="1">ATP phosphoribosyltransferase</fullName>
        <shortName evidence="1">ATP-PRT</shortName>
        <shortName evidence="1">ATP-PRTase</shortName>
        <ecNumber evidence="1">2.4.2.17</ecNumber>
    </recommendedName>
</protein>
<dbReference type="EC" id="2.4.2.17" evidence="1"/>
<dbReference type="EMBL" id="CP001598">
    <property type="protein sequence ID" value="ACQ45961.1"/>
    <property type="molecule type" value="Genomic_DNA"/>
</dbReference>
<dbReference type="RefSeq" id="WP_001244471.1">
    <property type="nucleotide sequence ID" value="NC_012659.1"/>
</dbReference>
<dbReference type="SMR" id="C3P501"/>
<dbReference type="GeneID" id="45021404"/>
<dbReference type="KEGG" id="bai:BAA_1492"/>
<dbReference type="HOGENOM" id="CLU_038115_2_0_9"/>
<dbReference type="UniPathway" id="UPA00031">
    <property type="reaction ID" value="UER00006"/>
</dbReference>
<dbReference type="GO" id="GO:0005737">
    <property type="term" value="C:cytoplasm"/>
    <property type="evidence" value="ECO:0007669"/>
    <property type="project" value="UniProtKB-SubCell"/>
</dbReference>
<dbReference type="GO" id="GO:0005524">
    <property type="term" value="F:ATP binding"/>
    <property type="evidence" value="ECO:0007669"/>
    <property type="project" value="UniProtKB-KW"/>
</dbReference>
<dbReference type="GO" id="GO:0003879">
    <property type="term" value="F:ATP phosphoribosyltransferase activity"/>
    <property type="evidence" value="ECO:0007669"/>
    <property type="project" value="UniProtKB-UniRule"/>
</dbReference>
<dbReference type="GO" id="GO:0000105">
    <property type="term" value="P:L-histidine biosynthetic process"/>
    <property type="evidence" value="ECO:0007669"/>
    <property type="project" value="UniProtKB-UniRule"/>
</dbReference>
<dbReference type="CDD" id="cd13595">
    <property type="entry name" value="PBP2_HisGs"/>
    <property type="match status" value="1"/>
</dbReference>
<dbReference type="FunFam" id="3.40.190.10:FF:000011">
    <property type="entry name" value="ATP phosphoribosyltransferase"/>
    <property type="match status" value="1"/>
</dbReference>
<dbReference type="Gene3D" id="3.40.190.10">
    <property type="entry name" value="Periplasmic binding protein-like II"/>
    <property type="match status" value="2"/>
</dbReference>
<dbReference type="HAMAP" id="MF_01018">
    <property type="entry name" value="HisG_Short"/>
    <property type="match status" value="1"/>
</dbReference>
<dbReference type="InterPro" id="IPR013820">
    <property type="entry name" value="ATP_PRibTrfase_cat"/>
</dbReference>
<dbReference type="InterPro" id="IPR018198">
    <property type="entry name" value="ATP_PRibTrfase_CS"/>
</dbReference>
<dbReference type="InterPro" id="IPR001348">
    <property type="entry name" value="ATP_PRibTrfase_HisG"/>
</dbReference>
<dbReference type="InterPro" id="IPR024893">
    <property type="entry name" value="ATP_PRibTrfase_HisG_short"/>
</dbReference>
<dbReference type="NCBIfam" id="TIGR00070">
    <property type="entry name" value="hisG"/>
    <property type="match status" value="1"/>
</dbReference>
<dbReference type="PANTHER" id="PTHR21403:SF8">
    <property type="entry name" value="ATP PHOSPHORIBOSYLTRANSFERASE"/>
    <property type="match status" value="1"/>
</dbReference>
<dbReference type="PANTHER" id="PTHR21403">
    <property type="entry name" value="ATP PHOSPHORIBOSYLTRANSFERASE ATP-PRTASE"/>
    <property type="match status" value="1"/>
</dbReference>
<dbReference type="Pfam" id="PF01634">
    <property type="entry name" value="HisG"/>
    <property type="match status" value="1"/>
</dbReference>
<dbReference type="SUPFAM" id="SSF53850">
    <property type="entry name" value="Periplasmic binding protein-like II"/>
    <property type="match status" value="1"/>
</dbReference>
<dbReference type="PROSITE" id="PS01316">
    <property type="entry name" value="ATP_P_PHORIBOSYLTR"/>
    <property type="match status" value="1"/>
</dbReference>
<proteinExistence type="inferred from homology"/>
<gene>
    <name evidence="1" type="primary">hisG</name>
    <name type="ordered locus">BAA_1492</name>
</gene>
<keyword id="KW-0028">Amino-acid biosynthesis</keyword>
<keyword id="KW-0067">ATP-binding</keyword>
<keyword id="KW-0963">Cytoplasm</keyword>
<keyword id="KW-0328">Glycosyltransferase</keyword>
<keyword id="KW-0368">Histidine biosynthesis</keyword>
<keyword id="KW-0547">Nucleotide-binding</keyword>
<keyword id="KW-0808">Transferase</keyword>
<feature type="chain" id="PRO_1000213252" description="ATP phosphoribosyltransferase">
    <location>
        <begin position="1"/>
        <end position="211"/>
    </location>
</feature>
<sequence>MRNIQIALTKGRLEKHVIPLFEQIGIDCSELKNKGRKLVFQSKNTDISFILVKAVDVATYVEHGVADIGVVGKDILMENEKDIYEMLDLGVGVCKFCVASIPTYNPKSYRKKCIATKYPHITSNYFHNKGEDVEIIKIEGSVEIAPILGLADAIVDIVETGKTLQENGLIVFEEMYSISARMIVNKAALKTKKDEIFSIINMMEQEILSGK</sequence>
<name>HIS1_BACAA</name>
<comment type="function">
    <text evidence="1">Catalyzes the condensation of ATP and 5-phosphoribose 1-diphosphate to form N'-(5'-phosphoribosyl)-ATP (PR-ATP). Has a crucial role in the pathway because the rate of histidine biosynthesis seems to be controlled primarily by regulation of HisG enzymatic activity.</text>
</comment>
<comment type="catalytic activity">
    <reaction evidence="1">
        <text>1-(5-phospho-beta-D-ribosyl)-ATP + diphosphate = 5-phospho-alpha-D-ribose 1-diphosphate + ATP</text>
        <dbReference type="Rhea" id="RHEA:18473"/>
        <dbReference type="ChEBI" id="CHEBI:30616"/>
        <dbReference type="ChEBI" id="CHEBI:33019"/>
        <dbReference type="ChEBI" id="CHEBI:58017"/>
        <dbReference type="ChEBI" id="CHEBI:73183"/>
        <dbReference type="EC" id="2.4.2.17"/>
    </reaction>
</comment>
<comment type="pathway">
    <text evidence="1">Amino-acid biosynthesis; L-histidine biosynthesis; L-histidine from 5-phospho-alpha-D-ribose 1-diphosphate: step 1/9.</text>
</comment>
<comment type="subunit">
    <text evidence="1">Heteromultimer composed of HisG and HisZ subunits.</text>
</comment>
<comment type="subcellular location">
    <subcellularLocation>
        <location evidence="1">Cytoplasm</location>
    </subcellularLocation>
</comment>
<comment type="domain">
    <text>Lacks the C-terminal regulatory region which is replaced by HisZ.</text>
</comment>
<comment type="similarity">
    <text evidence="1">Belongs to the ATP phosphoribosyltransferase family. Short subfamily.</text>
</comment>